<sequence length="690" mass="77930">MVLTDEQRQAIAKKREEAIRRAAAYREREMQAAANATASTSSAAPPAPPKPVIPVMFSQNRQNFQPMKPTMNNSTKQSTINNYIKQVQKPEPTSLIKPTIGVKLKLDIGDRIKIEFYPFHSAVIDLIKQVPSRNYDPAKRSWTVASSDHITISNILKNATAVKVELEPLPQNIIGLTNFKPKAAPSDLNTVMDPSLIERLFPYQKEGVIFALERDGRILLADEMGLGKSVQALTIARYYKADWPLLIVCPASVKGAWKKQLNTFFPIIHRIFIVDKSSDPLPDVCTSNTVAIMSYEQMVLKHDILKKEKYRTIIFDESHMLKDGKARRTKVATDLSKVALHVILLSGTPALSRPSELFTQIRLIDHKLFTNFHEFAIRYCDGKQGRFCFEAKGCTNSEELAAIMFKRLMIRRLKADVLKDLPEKRREVVYVSGPTIDARMDDLQKARADYEKVNSMERKHESLLEFYSLTGIVKAAAVCEHILENYFYPDAPPRKVLIFAHHQIVLDTIQVEVNKRKLGSIRIDGKTPSHRRTALCDSFQTDDNIRVAVLSITAAGVGITLTAASVVVFAEIHFNPGYLVQAEDRAHRVGQKDSVFVQYLIAKKTADDVMWNMVQQKLDVLGQVSLSSDTFRTADKMHLRFNDAAQPGIAEYLKKTPDTTIDEWEDPVEEKEDDDLEIICDSPAPKRIKN</sequence>
<comment type="function">
    <text evidence="1">ATP-dependent annealing helicase that catalyzes the rewinding of the stably unwound DNA.</text>
</comment>
<comment type="catalytic activity">
    <reaction evidence="1">
        <text>ATP + H2O = ADP + phosphate + H(+)</text>
        <dbReference type="Rhea" id="RHEA:13065"/>
        <dbReference type="ChEBI" id="CHEBI:15377"/>
        <dbReference type="ChEBI" id="CHEBI:15378"/>
        <dbReference type="ChEBI" id="CHEBI:30616"/>
        <dbReference type="ChEBI" id="CHEBI:43474"/>
        <dbReference type="ChEBI" id="CHEBI:456216"/>
    </reaction>
    <physiologicalReaction direction="left-to-right" evidence="1">
        <dbReference type="Rhea" id="RHEA:13066"/>
    </physiologicalReaction>
</comment>
<comment type="subcellular location">
    <subcellularLocation>
        <location evidence="1">Nucleus</location>
    </subcellularLocation>
</comment>
<comment type="alternative products">
    <event type="alternative splicing"/>
    <isoform>
        <id>Q8MNV7-1</id>
        <name evidence="9">c</name>
        <sequence type="displayed"/>
    </isoform>
    <isoform>
        <id>Q8MNV7-2</id>
        <name evidence="7">a</name>
        <sequence type="described" ref="VSP_012922"/>
    </isoform>
    <isoform>
        <id>Q8MNV7-3</id>
        <name evidence="8">b</name>
        <sequence type="described" ref="VSP_012921 VSP_012922"/>
    </isoform>
</comment>
<comment type="similarity">
    <text evidence="4">Belongs to the SNF2/RAD54 helicase family. SMARCAL1 subfamily.</text>
</comment>
<organism>
    <name type="scientific">Caenorhabditis elegans</name>
    <dbReference type="NCBI Taxonomy" id="6239"/>
    <lineage>
        <taxon>Eukaryota</taxon>
        <taxon>Metazoa</taxon>
        <taxon>Ecdysozoa</taxon>
        <taxon>Nematoda</taxon>
        <taxon>Chromadorea</taxon>
        <taxon>Rhabditida</taxon>
        <taxon>Rhabditina</taxon>
        <taxon>Rhabditomorpha</taxon>
        <taxon>Rhabditoidea</taxon>
        <taxon>Rhabditidae</taxon>
        <taxon>Peloderinae</taxon>
        <taxon>Caenorhabditis</taxon>
    </lineage>
</organism>
<gene>
    <name evidence="9" type="primary">smrc-1</name>
    <name evidence="9" type="ORF">C16A3.1</name>
</gene>
<reference key="1">
    <citation type="journal article" date="1998" name="Science">
        <title>Genome sequence of the nematode C. elegans: a platform for investigating biology.</title>
        <authorList>
            <consortium name="The C. elegans sequencing consortium"/>
        </authorList>
    </citation>
    <scope>NUCLEOTIDE SEQUENCE [LARGE SCALE GENOMIC DNA]</scope>
    <source>
        <strain>Bristol N2</strain>
    </source>
</reference>
<evidence type="ECO:0000250" key="1">
    <source>
        <dbReference type="UniProtKB" id="Q9NZC9"/>
    </source>
</evidence>
<evidence type="ECO:0000255" key="2">
    <source>
        <dbReference type="PROSITE-ProRule" id="PRU00541"/>
    </source>
</evidence>
<evidence type="ECO:0000255" key="3">
    <source>
        <dbReference type="PROSITE-ProRule" id="PRU00542"/>
    </source>
</evidence>
<evidence type="ECO:0000255" key="4">
    <source>
        <dbReference type="PROSITE-ProRule" id="PRU00800"/>
    </source>
</evidence>
<evidence type="ECO:0000256" key="5">
    <source>
        <dbReference type="SAM" id="MobiDB-lite"/>
    </source>
</evidence>
<evidence type="ECO:0000305" key="6"/>
<evidence type="ECO:0000312" key="7">
    <source>
        <dbReference type="WormBase" id="C16A3.1a"/>
    </source>
</evidence>
<evidence type="ECO:0000312" key="8">
    <source>
        <dbReference type="WormBase" id="C16A3.1b"/>
    </source>
</evidence>
<evidence type="ECO:0000312" key="9">
    <source>
        <dbReference type="WormBase" id="C16A3.1c"/>
    </source>
</evidence>
<name>SMAL1_CAEEL</name>
<accession>Q8MNV7</accession>
<accession>Q95ZY8</accession>
<accession>Q95ZY9</accession>
<proteinExistence type="inferred from homology"/>
<feature type="chain" id="PRO_0000074350" description="SWI/SNF-related matrix-associated actin-dependent regulator of chromatin subfamily A-like protein 1 homolog" evidence="6">
    <location>
        <begin position="1"/>
        <end position="690"/>
    </location>
</feature>
<feature type="domain" description="HARP" evidence="4">
    <location>
        <begin position="92"/>
        <end position="170"/>
    </location>
</feature>
<feature type="domain" description="Helicase ATP-binding" evidence="2">
    <location>
        <begin position="209"/>
        <end position="367"/>
    </location>
</feature>
<feature type="domain" description="Helicase C-terminal" evidence="3">
    <location>
        <begin position="482"/>
        <end position="639"/>
    </location>
</feature>
<feature type="region of interest" description="Disordered" evidence="5">
    <location>
        <begin position="30"/>
        <end position="49"/>
    </location>
</feature>
<feature type="short sequence motif" description="DESH box">
    <location>
        <begin position="316"/>
        <end position="319"/>
    </location>
</feature>
<feature type="short sequence motif" description="Nuclear localization signal" evidence="1">
    <location>
        <begin position="411"/>
        <end position="428"/>
    </location>
</feature>
<feature type="compositionally biased region" description="Low complexity" evidence="5">
    <location>
        <begin position="31"/>
        <end position="44"/>
    </location>
</feature>
<feature type="binding site" evidence="2">
    <location>
        <begin position="222"/>
        <end position="229"/>
    </location>
    <ligand>
        <name>ATP</name>
        <dbReference type="ChEBI" id="CHEBI:30616"/>
    </ligand>
</feature>
<feature type="splice variant" id="VSP_012921" description="In isoform b." evidence="6">
    <location>
        <position position="31"/>
    </location>
</feature>
<feature type="splice variant" id="VSP_012922" description="In isoform a and isoform b." evidence="6">
    <location>
        <begin position="62"/>
        <end position="64"/>
    </location>
</feature>
<protein>
    <recommendedName>
        <fullName evidence="9">SWI/SNF-related matrix-associated actin-dependent regulator of chromatin subfamily A-like protein 1 homolog</fullName>
        <ecNumber evidence="1">3.6.4.-</ecNumber>
    </recommendedName>
</protein>
<dbReference type="EC" id="3.6.4.-" evidence="1"/>
<dbReference type="EMBL" id="BX284603">
    <property type="protein sequence ID" value="CCD63219.1"/>
    <property type="molecule type" value="Genomic_DNA"/>
</dbReference>
<dbReference type="EMBL" id="BX284603">
    <property type="protein sequence ID" value="CCD63220.1"/>
    <property type="molecule type" value="Genomic_DNA"/>
</dbReference>
<dbReference type="EMBL" id="BX284603">
    <property type="protein sequence ID" value="CCD63221.1"/>
    <property type="molecule type" value="Genomic_DNA"/>
</dbReference>
<dbReference type="RefSeq" id="NP_498400.1">
    <molecule id="Q8MNV7-2"/>
    <property type="nucleotide sequence ID" value="NM_065999.6"/>
</dbReference>
<dbReference type="RefSeq" id="NP_498401.2">
    <molecule id="Q8MNV7-3"/>
    <property type="nucleotide sequence ID" value="NM_066000.2"/>
</dbReference>
<dbReference type="RefSeq" id="NP_741192.1">
    <molecule id="Q8MNV7-1"/>
    <property type="nucleotide sequence ID" value="NM_171165.5"/>
</dbReference>
<dbReference type="SMR" id="Q8MNV7"/>
<dbReference type="BioGRID" id="41125">
    <property type="interactions" value="2"/>
</dbReference>
<dbReference type="FunCoup" id="Q8MNV7">
    <property type="interactions" value="2486"/>
</dbReference>
<dbReference type="STRING" id="6239.C16A3.1c.1"/>
<dbReference type="PaxDb" id="6239-C16A3.1c"/>
<dbReference type="PeptideAtlas" id="Q8MNV7"/>
<dbReference type="EnsemblMetazoa" id="C16A3.1a.1">
    <molecule id="Q8MNV7-2"/>
    <property type="protein sequence ID" value="C16A3.1a.1"/>
    <property type="gene ID" value="WBGene00015806"/>
</dbReference>
<dbReference type="EnsemblMetazoa" id="C16A3.1b.1">
    <molecule id="Q8MNV7-3"/>
    <property type="protein sequence ID" value="C16A3.1b.1"/>
    <property type="gene ID" value="WBGene00015806"/>
</dbReference>
<dbReference type="EnsemblMetazoa" id="C16A3.1c.1">
    <molecule id="Q8MNV7-1"/>
    <property type="protein sequence ID" value="C16A3.1c.1"/>
    <property type="gene ID" value="WBGene00015806"/>
</dbReference>
<dbReference type="GeneID" id="175907"/>
<dbReference type="KEGG" id="cel:CELE_C16A3.1"/>
<dbReference type="UCSC" id="C16A3.1a">
    <molecule id="Q8MNV7-1"/>
    <property type="organism name" value="c. elegans"/>
</dbReference>
<dbReference type="AGR" id="WB:WBGene00015806"/>
<dbReference type="CTD" id="175907"/>
<dbReference type="WormBase" id="C16A3.1a">
    <molecule id="Q8MNV7-2"/>
    <property type="protein sequence ID" value="CE27688"/>
    <property type="gene ID" value="WBGene00015806"/>
    <property type="gene designation" value="smrc-1"/>
</dbReference>
<dbReference type="WormBase" id="C16A3.1b">
    <molecule id="Q8MNV7-3"/>
    <property type="protein sequence ID" value="CE30605"/>
    <property type="gene ID" value="WBGene00015806"/>
    <property type="gene designation" value="smrc-1"/>
</dbReference>
<dbReference type="WormBase" id="C16A3.1c">
    <molecule id="Q8MNV7-1"/>
    <property type="protein sequence ID" value="CE30606"/>
    <property type="gene ID" value="WBGene00015806"/>
    <property type="gene designation" value="smrc-1"/>
</dbReference>
<dbReference type="eggNOG" id="KOG1000">
    <property type="taxonomic scope" value="Eukaryota"/>
</dbReference>
<dbReference type="GeneTree" id="ENSGT00940000172463"/>
<dbReference type="InParanoid" id="Q8MNV7"/>
<dbReference type="OMA" id="FTLHRAR"/>
<dbReference type="OrthoDB" id="2801544at2759"/>
<dbReference type="PhylomeDB" id="Q8MNV7"/>
<dbReference type="PRO" id="PR:Q8MNV7"/>
<dbReference type="Proteomes" id="UP000001940">
    <property type="component" value="Chromosome III"/>
</dbReference>
<dbReference type="Bgee" id="WBGene00015806">
    <property type="expression patterns" value="Expressed in germ line (C elegans) and 4 other cell types or tissues"/>
</dbReference>
<dbReference type="GO" id="GO:0043596">
    <property type="term" value="C:nuclear replication fork"/>
    <property type="evidence" value="ECO:0000318"/>
    <property type="project" value="GO_Central"/>
</dbReference>
<dbReference type="GO" id="GO:0005634">
    <property type="term" value="C:nucleus"/>
    <property type="evidence" value="ECO:0000250"/>
    <property type="project" value="UniProtKB"/>
</dbReference>
<dbReference type="GO" id="GO:0005524">
    <property type="term" value="F:ATP binding"/>
    <property type="evidence" value="ECO:0007669"/>
    <property type="project" value="UniProtKB-KW"/>
</dbReference>
<dbReference type="GO" id="GO:0036310">
    <property type="term" value="F:ATP-dependent DNA/DNA annealing activity"/>
    <property type="evidence" value="ECO:0000250"/>
    <property type="project" value="UniProtKB"/>
</dbReference>
<dbReference type="GO" id="GO:0004386">
    <property type="term" value="F:helicase activity"/>
    <property type="evidence" value="ECO:0007669"/>
    <property type="project" value="UniProtKB-KW"/>
</dbReference>
<dbReference type="GO" id="GO:0016787">
    <property type="term" value="F:hydrolase activity"/>
    <property type="evidence" value="ECO:0007669"/>
    <property type="project" value="UniProtKB-KW"/>
</dbReference>
<dbReference type="GO" id="GO:0006325">
    <property type="term" value="P:chromatin organization"/>
    <property type="evidence" value="ECO:0007669"/>
    <property type="project" value="UniProtKB-KW"/>
</dbReference>
<dbReference type="GO" id="GO:0006281">
    <property type="term" value="P:DNA repair"/>
    <property type="evidence" value="ECO:0000318"/>
    <property type="project" value="GO_Central"/>
</dbReference>
<dbReference type="GO" id="GO:0006357">
    <property type="term" value="P:regulation of transcription by RNA polymerase II"/>
    <property type="evidence" value="ECO:0000250"/>
    <property type="project" value="UniProtKB"/>
</dbReference>
<dbReference type="GO" id="GO:0031297">
    <property type="term" value="P:replication fork processing"/>
    <property type="evidence" value="ECO:0000318"/>
    <property type="project" value="GO_Central"/>
</dbReference>
<dbReference type="CDD" id="cd18010">
    <property type="entry name" value="DEXHc_HARP_SMARCAL1"/>
    <property type="match status" value="1"/>
</dbReference>
<dbReference type="CDD" id="cd18793">
    <property type="entry name" value="SF2_C_SNF"/>
    <property type="match status" value="1"/>
</dbReference>
<dbReference type="FunFam" id="3.40.50.300:FF:001501">
    <property type="entry name" value="Chromatin remodeling factor18"/>
    <property type="match status" value="1"/>
</dbReference>
<dbReference type="FunFam" id="3.40.50.10810:FF:000019">
    <property type="entry name" value="DNA excision repair protein ERCC-6-like 2 isoform X1"/>
    <property type="match status" value="1"/>
</dbReference>
<dbReference type="Gene3D" id="3.40.50.300">
    <property type="entry name" value="P-loop containing nucleotide triphosphate hydrolases"/>
    <property type="match status" value="1"/>
</dbReference>
<dbReference type="Gene3D" id="3.40.50.10810">
    <property type="entry name" value="Tandem AAA-ATPase domain"/>
    <property type="match status" value="1"/>
</dbReference>
<dbReference type="InterPro" id="IPR010003">
    <property type="entry name" value="HARP_dom"/>
</dbReference>
<dbReference type="InterPro" id="IPR014001">
    <property type="entry name" value="Helicase_ATP-bd"/>
</dbReference>
<dbReference type="InterPro" id="IPR001650">
    <property type="entry name" value="Helicase_C-like"/>
</dbReference>
<dbReference type="InterPro" id="IPR027417">
    <property type="entry name" value="P-loop_NTPase"/>
</dbReference>
<dbReference type="InterPro" id="IPR038718">
    <property type="entry name" value="SNF2-like_sf"/>
</dbReference>
<dbReference type="InterPro" id="IPR049730">
    <property type="entry name" value="SNF2/RAD54-like_C"/>
</dbReference>
<dbReference type="InterPro" id="IPR000330">
    <property type="entry name" value="SNF2_N"/>
</dbReference>
<dbReference type="PANTHER" id="PTHR45766">
    <property type="entry name" value="DNA ANNEALING HELICASE AND ENDONUCLEASE ZRANB3 FAMILY MEMBER"/>
    <property type="match status" value="1"/>
</dbReference>
<dbReference type="PANTHER" id="PTHR45766:SF6">
    <property type="entry name" value="SWI_SNF-RELATED MATRIX-ASSOCIATED ACTIN-DEPENDENT REGULATOR OF CHROMATIN SUBFAMILY A-LIKE PROTEIN 1"/>
    <property type="match status" value="1"/>
</dbReference>
<dbReference type="Pfam" id="PF07443">
    <property type="entry name" value="HARP"/>
    <property type="match status" value="1"/>
</dbReference>
<dbReference type="Pfam" id="PF00271">
    <property type="entry name" value="Helicase_C"/>
    <property type="match status" value="1"/>
</dbReference>
<dbReference type="Pfam" id="PF00176">
    <property type="entry name" value="SNF2-rel_dom"/>
    <property type="match status" value="1"/>
</dbReference>
<dbReference type="SMART" id="SM00487">
    <property type="entry name" value="DEXDc"/>
    <property type="match status" value="1"/>
</dbReference>
<dbReference type="SMART" id="SM00490">
    <property type="entry name" value="HELICc"/>
    <property type="match status" value="1"/>
</dbReference>
<dbReference type="SUPFAM" id="SSF52540">
    <property type="entry name" value="P-loop containing nucleoside triphosphate hydrolases"/>
    <property type="match status" value="2"/>
</dbReference>
<dbReference type="PROSITE" id="PS51467">
    <property type="entry name" value="HARP"/>
    <property type="match status" value="1"/>
</dbReference>
<dbReference type="PROSITE" id="PS51192">
    <property type="entry name" value="HELICASE_ATP_BIND_1"/>
    <property type="match status" value="1"/>
</dbReference>
<dbReference type="PROSITE" id="PS51194">
    <property type="entry name" value="HELICASE_CTER"/>
    <property type="match status" value="1"/>
</dbReference>
<keyword id="KW-0025">Alternative splicing</keyword>
<keyword id="KW-0156">Chromatin regulator</keyword>
<keyword id="KW-0378">Hydrolase</keyword>
<keyword id="KW-0539">Nucleus</keyword>
<keyword id="KW-1185">Reference proteome</keyword>